<name>SECE_HALMA</name>
<organism>
    <name type="scientific">Haloarcula marismortui (strain ATCC 43049 / DSM 3752 / JCM 8966 / VKM B-1809)</name>
    <name type="common">Halobacterium marismortui</name>
    <dbReference type="NCBI Taxonomy" id="272569"/>
    <lineage>
        <taxon>Archaea</taxon>
        <taxon>Methanobacteriati</taxon>
        <taxon>Methanobacteriota</taxon>
        <taxon>Stenosarchaea group</taxon>
        <taxon>Halobacteria</taxon>
        <taxon>Halobacteriales</taxon>
        <taxon>Haloarculaceae</taxon>
        <taxon>Haloarcula</taxon>
    </lineage>
</organism>
<accession>Q5V456</accession>
<feature type="chain" id="PRO_0000104215" description="Protein translocase subunit SecE">
    <location>
        <begin position="1"/>
        <end position="59"/>
    </location>
</feature>
<feature type="transmembrane region" description="Helical" evidence="1">
    <location>
        <begin position="33"/>
        <end position="53"/>
    </location>
</feature>
<sequence length="59" mass="6331">MDVPYDLTSYIRVLKLASTPSWEEFSQIAKIAGAGIALVGLLGFIIFAVMTFVPGSKPV</sequence>
<reference key="1">
    <citation type="journal article" date="2004" name="Genome Res.">
        <title>Genome sequence of Haloarcula marismortui: a halophilic archaeon from the Dead Sea.</title>
        <authorList>
            <person name="Baliga N.S."/>
            <person name="Bonneau R."/>
            <person name="Facciotti M.T."/>
            <person name="Pan M."/>
            <person name="Glusman G."/>
            <person name="Deutsch E.W."/>
            <person name="Shannon P."/>
            <person name="Chiu Y."/>
            <person name="Weng R.S."/>
            <person name="Gan R.R."/>
            <person name="Hung P."/>
            <person name="Date S.V."/>
            <person name="Marcotte E."/>
            <person name="Hood L."/>
            <person name="Ng W.V."/>
        </authorList>
    </citation>
    <scope>NUCLEOTIDE SEQUENCE [LARGE SCALE GENOMIC DNA]</scope>
    <source>
        <strain>ATCC 43049 / DSM 3752 / JCM 8966 / VKM B-1809</strain>
    </source>
</reference>
<proteinExistence type="inferred from homology"/>
<keyword id="KW-1003">Cell membrane</keyword>
<keyword id="KW-0472">Membrane</keyword>
<keyword id="KW-0653">Protein transport</keyword>
<keyword id="KW-1185">Reference proteome</keyword>
<keyword id="KW-0811">Translocation</keyword>
<keyword id="KW-0812">Transmembrane</keyword>
<keyword id="KW-1133">Transmembrane helix</keyword>
<keyword id="KW-0813">Transport</keyword>
<comment type="function">
    <text evidence="1">Essential subunit of the Sec protein translocation channel SecYEG. Clamps together the 2 halves of SecY. May contact the channel plug during translocation.</text>
</comment>
<comment type="subunit">
    <text evidence="1">Component of the Sec protein translocase complex. Heterotrimer consisting of SecY (alpha), SecG (beta) and SecE (gamma) subunits. The heterotrimers can form oligomers, although 1 heterotrimer is thought to be able to translocate proteins. Interacts with the ribosome. May interact with SecDF, and other proteins may be involved.</text>
</comment>
<comment type="subcellular location">
    <subcellularLocation>
        <location evidence="1">Cell membrane</location>
        <topology evidence="1">Single-pass membrane protein</topology>
    </subcellularLocation>
</comment>
<comment type="similarity">
    <text evidence="1">Belongs to the SecE/SEC61-gamma family.</text>
</comment>
<evidence type="ECO:0000255" key="1">
    <source>
        <dbReference type="HAMAP-Rule" id="MF_00422"/>
    </source>
</evidence>
<dbReference type="EMBL" id="AY596297">
    <property type="protein sequence ID" value="AAV45696.1"/>
    <property type="molecule type" value="Genomic_DNA"/>
</dbReference>
<dbReference type="RefSeq" id="WP_004516835.1">
    <property type="nucleotide sequence ID" value="NZ_CP039138.1"/>
</dbReference>
<dbReference type="SMR" id="Q5V456"/>
<dbReference type="STRING" id="272569.rrnAC0700"/>
<dbReference type="TCDB" id="3.A.5.7.1">
    <property type="family name" value="the general secretory pathway (sec) family"/>
</dbReference>
<dbReference type="PaxDb" id="272569-rrnAC0700"/>
<dbReference type="EnsemblBacteria" id="AAV45696">
    <property type="protein sequence ID" value="AAV45696"/>
    <property type="gene ID" value="rrnAC0700"/>
</dbReference>
<dbReference type="KEGG" id="hma:rrnAC0700"/>
<dbReference type="PATRIC" id="fig|272569.17.peg.1446"/>
<dbReference type="eggNOG" id="arCOG02204">
    <property type="taxonomic scope" value="Archaea"/>
</dbReference>
<dbReference type="HOGENOM" id="CLU_191921_2_0_2"/>
<dbReference type="Proteomes" id="UP000001169">
    <property type="component" value="Chromosome I"/>
</dbReference>
<dbReference type="GO" id="GO:0005886">
    <property type="term" value="C:plasma membrane"/>
    <property type="evidence" value="ECO:0007669"/>
    <property type="project" value="UniProtKB-SubCell"/>
</dbReference>
<dbReference type="GO" id="GO:0008320">
    <property type="term" value="F:protein transmembrane transporter activity"/>
    <property type="evidence" value="ECO:0007669"/>
    <property type="project" value="UniProtKB-UniRule"/>
</dbReference>
<dbReference type="GO" id="GO:0065002">
    <property type="term" value="P:intracellular protein transmembrane transport"/>
    <property type="evidence" value="ECO:0007669"/>
    <property type="project" value="UniProtKB-UniRule"/>
</dbReference>
<dbReference type="GO" id="GO:0009306">
    <property type="term" value="P:protein secretion"/>
    <property type="evidence" value="ECO:0007669"/>
    <property type="project" value="UniProtKB-UniRule"/>
</dbReference>
<dbReference type="GO" id="GO:0006605">
    <property type="term" value="P:protein targeting"/>
    <property type="evidence" value="ECO:0007669"/>
    <property type="project" value="UniProtKB-UniRule"/>
</dbReference>
<dbReference type="Gene3D" id="1.20.5.820">
    <property type="entry name" value="Preprotein translocase SecE subunit"/>
    <property type="match status" value="1"/>
</dbReference>
<dbReference type="HAMAP" id="MF_00422">
    <property type="entry name" value="SecE"/>
    <property type="match status" value="1"/>
</dbReference>
<dbReference type="InterPro" id="IPR023391">
    <property type="entry name" value="Prot_translocase_SecE_dom_sf"/>
</dbReference>
<dbReference type="InterPro" id="IPR008158">
    <property type="entry name" value="Translocase_Sec61-g"/>
</dbReference>
<dbReference type="InterPro" id="IPR001901">
    <property type="entry name" value="Translocase_SecE/Sec61-g"/>
</dbReference>
<dbReference type="NCBIfam" id="NF006910">
    <property type="entry name" value="PRK09400.1-6"/>
    <property type="match status" value="1"/>
</dbReference>
<dbReference type="NCBIfam" id="TIGR00327">
    <property type="entry name" value="secE_euk_arch"/>
    <property type="match status" value="1"/>
</dbReference>
<dbReference type="SUPFAM" id="SSF103456">
    <property type="entry name" value="Preprotein translocase SecE subunit"/>
    <property type="match status" value="1"/>
</dbReference>
<gene>
    <name evidence="1" type="primary">secE</name>
    <name type="ordered locus">rrnAC0700</name>
</gene>
<protein>
    <recommendedName>
        <fullName evidence="1">Protein translocase subunit SecE</fullName>
    </recommendedName>
    <alternativeName>
        <fullName evidence="1">Protein transport protein Sec61 gamma subunit homolog</fullName>
    </alternativeName>
</protein>